<evidence type="ECO:0000250" key="1"/>
<evidence type="ECO:0000255" key="2">
    <source>
        <dbReference type="PROSITE-ProRule" id="PRU10126"/>
    </source>
</evidence>
<evidence type="ECO:0000305" key="3"/>
<feature type="chain" id="PRO_0000197444" description="Aldose 1-epimerase">
    <location>
        <begin position="1"/>
        <end position="346"/>
    </location>
</feature>
<feature type="active site" description="Proton donor" evidence="2">
    <location>
        <position position="175"/>
    </location>
</feature>
<feature type="active site" description="Proton acceptor" evidence="1">
    <location>
        <position position="309"/>
    </location>
</feature>
<feature type="binding site" evidence="1">
    <location>
        <position position="79"/>
    </location>
    <ligand>
        <name>substrate</name>
    </ligand>
</feature>
<feature type="binding site" evidence="1">
    <location>
        <position position="245"/>
    </location>
    <ligand>
        <name>substrate</name>
    </ligand>
</feature>
<gene>
    <name type="primary">galM</name>
    <name type="ordered locus">SF0548</name>
    <name type="ordered locus">S0556</name>
</gene>
<dbReference type="EC" id="5.1.3.3"/>
<dbReference type="EMBL" id="AE005674">
    <property type="protein sequence ID" value="AAN42192.1"/>
    <property type="molecule type" value="Genomic_DNA"/>
</dbReference>
<dbReference type="EMBL" id="AE014073">
    <property type="protein sequence ID" value="AAP16065.1"/>
    <property type="molecule type" value="Genomic_DNA"/>
</dbReference>
<dbReference type="RefSeq" id="NP_706485.1">
    <property type="nucleotide sequence ID" value="NC_004337.2"/>
</dbReference>
<dbReference type="RefSeq" id="WP_000931389.1">
    <property type="nucleotide sequence ID" value="NZ_WPGW01000046.1"/>
</dbReference>
<dbReference type="SMR" id="P0A9C4"/>
<dbReference type="STRING" id="198214.SF0548"/>
<dbReference type="PaxDb" id="198214-SF0548"/>
<dbReference type="GeneID" id="1023468"/>
<dbReference type="KEGG" id="sfl:SF0548"/>
<dbReference type="KEGG" id="sfx:S0556"/>
<dbReference type="PATRIC" id="fig|198214.7.peg.637"/>
<dbReference type="HOGENOM" id="CLU_031753_1_0_6"/>
<dbReference type="UniPathway" id="UPA00242"/>
<dbReference type="Proteomes" id="UP000001006">
    <property type="component" value="Chromosome"/>
</dbReference>
<dbReference type="Proteomes" id="UP000002673">
    <property type="component" value="Chromosome"/>
</dbReference>
<dbReference type="GO" id="GO:0005737">
    <property type="term" value="C:cytoplasm"/>
    <property type="evidence" value="ECO:0007669"/>
    <property type="project" value="UniProtKB-SubCell"/>
</dbReference>
<dbReference type="GO" id="GO:0004034">
    <property type="term" value="F:aldose 1-epimerase activity"/>
    <property type="evidence" value="ECO:0007669"/>
    <property type="project" value="UniProtKB-EC"/>
</dbReference>
<dbReference type="GO" id="GO:0030246">
    <property type="term" value="F:carbohydrate binding"/>
    <property type="evidence" value="ECO:0007669"/>
    <property type="project" value="InterPro"/>
</dbReference>
<dbReference type="GO" id="GO:0033499">
    <property type="term" value="P:galactose catabolic process via UDP-galactose, Leloir pathway"/>
    <property type="evidence" value="ECO:0007669"/>
    <property type="project" value="TreeGrafter"/>
</dbReference>
<dbReference type="GO" id="GO:0006006">
    <property type="term" value="P:glucose metabolic process"/>
    <property type="evidence" value="ECO:0007669"/>
    <property type="project" value="TreeGrafter"/>
</dbReference>
<dbReference type="CDD" id="cd09019">
    <property type="entry name" value="galactose_mutarotase_like"/>
    <property type="match status" value="1"/>
</dbReference>
<dbReference type="FunFam" id="2.70.98.10:FF:000002">
    <property type="entry name" value="Aldose 1-epimerase"/>
    <property type="match status" value="1"/>
</dbReference>
<dbReference type="Gene3D" id="2.70.98.10">
    <property type="match status" value="1"/>
</dbReference>
<dbReference type="InterPro" id="IPR018052">
    <property type="entry name" value="Ald1_epimerase_CS"/>
</dbReference>
<dbReference type="InterPro" id="IPR013458">
    <property type="entry name" value="Ald_epimerase_bac"/>
</dbReference>
<dbReference type="InterPro" id="IPR015443">
    <property type="entry name" value="Aldose_1-epimerase"/>
</dbReference>
<dbReference type="InterPro" id="IPR008183">
    <property type="entry name" value="Aldose_1/G6P_1-epimerase"/>
</dbReference>
<dbReference type="InterPro" id="IPR011013">
    <property type="entry name" value="Gal_mutarotase_sf_dom"/>
</dbReference>
<dbReference type="InterPro" id="IPR047215">
    <property type="entry name" value="Galactose_mutarotase-like"/>
</dbReference>
<dbReference type="InterPro" id="IPR014718">
    <property type="entry name" value="GH-type_carb-bd"/>
</dbReference>
<dbReference type="NCBIfam" id="TIGR02636">
    <property type="entry name" value="galM_Leloir"/>
    <property type="match status" value="1"/>
</dbReference>
<dbReference type="NCBIfam" id="NF008277">
    <property type="entry name" value="PRK11055.1"/>
    <property type="match status" value="1"/>
</dbReference>
<dbReference type="PANTHER" id="PTHR10091">
    <property type="entry name" value="ALDOSE-1-EPIMERASE"/>
    <property type="match status" value="1"/>
</dbReference>
<dbReference type="PANTHER" id="PTHR10091:SF0">
    <property type="entry name" value="GALACTOSE MUTAROTASE"/>
    <property type="match status" value="1"/>
</dbReference>
<dbReference type="Pfam" id="PF01263">
    <property type="entry name" value="Aldose_epim"/>
    <property type="match status" value="1"/>
</dbReference>
<dbReference type="PIRSF" id="PIRSF005096">
    <property type="entry name" value="GALM"/>
    <property type="match status" value="1"/>
</dbReference>
<dbReference type="SUPFAM" id="SSF74650">
    <property type="entry name" value="Galactose mutarotase-like"/>
    <property type="match status" value="1"/>
</dbReference>
<dbReference type="PROSITE" id="PS00545">
    <property type="entry name" value="ALDOSE_1_EPIMERASE"/>
    <property type="match status" value="1"/>
</dbReference>
<accession>P0A9C4</accession>
<accession>P40681</accession>
<comment type="function">
    <text evidence="1">Mutarotase converts alpha-aldose to the beta-anomer. It is active on D-glucose, L-arabinose, D-xylose, D-galactose, maltose and lactose (By similarity).</text>
</comment>
<comment type="catalytic activity">
    <reaction evidence="2">
        <text>alpha-D-glucose = beta-D-glucose</text>
        <dbReference type="Rhea" id="RHEA:10264"/>
        <dbReference type="ChEBI" id="CHEBI:15903"/>
        <dbReference type="ChEBI" id="CHEBI:17925"/>
        <dbReference type="EC" id="5.1.3.3"/>
    </reaction>
</comment>
<comment type="pathway">
    <text>Carbohydrate metabolism; hexose metabolism.</text>
</comment>
<comment type="subcellular location">
    <subcellularLocation>
        <location evidence="3">Cytoplasm</location>
    </subcellularLocation>
</comment>
<comment type="similarity">
    <text evidence="3">Belongs to the aldose epimerase family.</text>
</comment>
<name>GALM_SHIFL</name>
<reference key="1">
    <citation type="journal article" date="2002" name="Nucleic Acids Res.">
        <title>Genome sequence of Shigella flexneri 2a: insights into pathogenicity through comparison with genomes of Escherichia coli K12 and O157.</title>
        <authorList>
            <person name="Jin Q."/>
            <person name="Yuan Z."/>
            <person name="Xu J."/>
            <person name="Wang Y."/>
            <person name="Shen Y."/>
            <person name="Lu W."/>
            <person name="Wang J."/>
            <person name="Liu H."/>
            <person name="Yang J."/>
            <person name="Yang F."/>
            <person name="Zhang X."/>
            <person name="Zhang J."/>
            <person name="Yang G."/>
            <person name="Wu H."/>
            <person name="Qu D."/>
            <person name="Dong J."/>
            <person name="Sun L."/>
            <person name="Xue Y."/>
            <person name="Zhao A."/>
            <person name="Gao Y."/>
            <person name="Zhu J."/>
            <person name="Kan B."/>
            <person name="Ding K."/>
            <person name="Chen S."/>
            <person name="Cheng H."/>
            <person name="Yao Z."/>
            <person name="He B."/>
            <person name="Chen R."/>
            <person name="Ma D."/>
            <person name="Qiang B."/>
            <person name="Wen Y."/>
            <person name="Hou Y."/>
            <person name="Yu J."/>
        </authorList>
    </citation>
    <scope>NUCLEOTIDE SEQUENCE [LARGE SCALE GENOMIC DNA]</scope>
    <source>
        <strain>301 / Serotype 2a</strain>
    </source>
</reference>
<reference key="2">
    <citation type="journal article" date="2003" name="Infect. Immun.">
        <title>Complete genome sequence and comparative genomics of Shigella flexneri serotype 2a strain 2457T.</title>
        <authorList>
            <person name="Wei J."/>
            <person name="Goldberg M.B."/>
            <person name="Burland V."/>
            <person name="Venkatesan M.M."/>
            <person name="Deng W."/>
            <person name="Fournier G."/>
            <person name="Mayhew G.F."/>
            <person name="Plunkett G. III"/>
            <person name="Rose D.J."/>
            <person name="Darling A."/>
            <person name="Mau B."/>
            <person name="Perna N.T."/>
            <person name="Payne S.M."/>
            <person name="Runyen-Janecky L.J."/>
            <person name="Zhou S."/>
            <person name="Schwartz D.C."/>
            <person name="Blattner F.R."/>
        </authorList>
    </citation>
    <scope>NUCLEOTIDE SEQUENCE [LARGE SCALE GENOMIC DNA]</scope>
    <source>
        <strain>ATCC 700930 / 2457T / Serotype 2a</strain>
    </source>
</reference>
<organism>
    <name type="scientific">Shigella flexneri</name>
    <dbReference type="NCBI Taxonomy" id="623"/>
    <lineage>
        <taxon>Bacteria</taxon>
        <taxon>Pseudomonadati</taxon>
        <taxon>Pseudomonadota</taxon>
        <taxon>Gammaproteobacteria</taxon>
        <taxon>Enterobacterales</taxon>
        <taxon>Enterobacteriaceae</taxon>
        <taxon>Shigella</taxon>
    </lineage>
</organism>
<keyword id="KW-0119">Carbohydrate metabolism</keyword>
<keyword id="KW-0963">Cytoplasm</keyword>
<keyword id="KW-0413">Isomerase</keyword>
<keyword id="KW-1185">Reference proteome</keyword>
<protein>
    <recommendedName>
        <fullName>Aldose 1-epimerase</fullName>
        <ecNumber>5.1.3.3</ecNumber>
    </recommendedName>
    <alternativeName>
        <fullName>Galactose mutarotase</fullName>
    </alternativeName>
    <alternativeName>
        <fullName>Type-1 mutarotase</fullName>
    </alternativeName>
</protein>
<proteinExistence type="inferred from homology"/>
<sequence>MLNETPALAPDGQPYRLLTLRNNAGMVVTLMDWGATLLSARIPLSDGSVREALLGCASPECYQDQAAFLGASIGRYANRIANSRYTFDGETVTLSPSQGVNQLHGGPEGFDKRRWQIVNQNDRQVLFALSSDDGDQGFPGNLGATVQYRLTDDNRISITYRATVDKPCPVNMTNHVYFNLDGEQSDVRNHKLQILADEYLPVDEGGIPHDGLKSVAGTSFDFRSAKIIASEFLADDDQRKVKGYDHAFLLQAKGDGKKVAAHVWSADEKLQLKVYTTAPALQFYSGNFLGGTPSRGTEPYADWQGLALESEFLPDSPNHPEWPQPDCFLRPGEEYSSLTEYQFIAE</sequence>